<name>ERP27_BOVIN</name>
<organism>
    <name type="scientific">Bos taurus</name>
    <name type="common">Bovine</name>
    <dbReference type="NCBI Taxonomy" id="9913"/>
    <lineage>
        <taxon>Eukaryota</taxon>
        <taxon>Metazoa</taxon>
        <taxon>Chordata</taxon>
        <taxon>Craniata</taxon>
        <taxon>Vertebrata</taxon>
        <taxon>Euteleostomi</taxon>
        <taxon>Mammalia</taxon>
        <taxon>Eutheria</taxon>
        <taxon>Laurasiatheria</taxon>
        <taxon>Artiodactyla</taxon>
        <taxon>Ruminantia</taxon>
        <taxon>Pecora</taxon>
        <taxon>Bovidae</taxon>
        <taxon>Bovinae</taxon>
        <taxon>Bos</taxon>
    </lineage>
</organism>
<sequence length="272" mass="30399">MEAMPSRCLFLLFLSTCKLSPEVVAEVQESSDGPGAQEPMRLTDVQAAMEFIAAAEVAVIGFFQDSEVPAVSLIHSVVQNFQDVSFGISTASEVLAYYNITGNTISLFRLVDNKQLDLKGEDFESMDATKLSRFIESNNLRLVTEYNAITAIGLFNSMIPIHLLLIMNKASSEFEENLHRFQEAAKLFQGRILFILVDSGVKQNEKAISFFKLKMAELPALAIYQTLDDKWDTLPITEVLVEQVQNFCDGFLKGKGLRQNHEAKEKTSKVEL</sequence>
<evidence type="ECO:0000250" key="1">
    <source>
        <dbReference type="UniProtKB" id="Q96DN0"/>
    </source>
</evidence>
<evidence type="ECO:0000255" key="2"/>
<evidence type="ECO:0000255" key="3">
    <source>
        <dbReference type="PROSITE-ProRule" id="PRU00498"/>
    </source>
</evidence>
<evidence type="ECO:0000305" key="4"/>
<evidence type="ECO:0000312" key="5">
    <source>
        <dbReference type="Proteomes" id="UP000009136"/>
    </source>
</evidence>
<protein>
    <recommendedName>
        <fullName>Endoplasmic reticulum resident protein 27</fullName>
        <shortName>ER protein 27</shortName>
        <shortName>ERp27</shortName>
    </recommendedName>
    <alternativeName>
        <fullName evidence="4">Inactive protein disulfide-isomerase 27</fullName>
    </alternativeName>
</protein>
<reference evidence="5" key="1">
    <citation type="journal article" date="2009" name="Genome Biol.">
        <title>A whole-genome assembly of the domestic cow, Bos taurus.</title>
        <authorList>
            <person name="Zimin A.V."/>
            <person name="Delcher A.L."/>
            <person name="Florea L."/>
            <person name="Kelley D.R."/>
            <person name="Schatz M.C."/>
            <person name="Puiu D."/>
            <person name="Hanrahan F."/>
            <person name="Pertea G."/>
            <person name="Van Tassell C.P."/>
            <person name="Sonstegard T.S."/>
            <person name="Marcais G."/>
            <person name="Roberts M."/>
            <person name="Subramanian P."/>
            <person name="Yorke J.A."/>
            <person name="Salzberg S.L."/>
        </authorList>
    </citation>
    <scope>NUCLEOTIDE SEQUENCE [LARGE SCALE GENOMIC DNA]</scope>
    <source>
        <strain evidence="5">Hereford</strain>
    </source>
</reference>
<reference key="2">
    <citation type="submission" date="2005-11" db="EMBL/GenBank/DDBJ databases">
        <authorList>
            <consortium name="NIH - Mammalian Gene Collection (MGC) project"/>
        </authorList>
    </citation>
    <scope>NUCLEOTIDE SEQUENCE [LARGE SCALE MRNA] (ISOFORM 2)</scope>
    <source>
        <strain>Crossbred X Angus</strain>
        <tissue>Liver</tissue>
    </source>
</reference>
<keyword id="KW-0025">Alternative splicing</keyword>
<keyword id="KW-0256">Endoplasmic reticulum</keyword>
<keyword id="KW-0325">Glycoprotein</keyword>
<keyword id="KW-1185">Reference proteome</keyword>
<keyword id="KW-0732">Signal</keyword>
<keyword id="KW-0834">Unfolded protein response</keyword>
<gene>
    <name type="primary">ERP27</name>
</gene>
<comment type="function">
    <text evidence="1">Specifically binds unfolded proteins and may recruit protein disulfide isomerase PDIA3 to unfolded substrates. Binds protein substrates via a hydrophobic pocket in the C-terminal domain. May play a role in the unfolded stress response.</text>
</comment>
<comment type="subunit">
    <text evidence="1">Interacts with PDIA3.</text>
</comment>
<comment type="subcellular location">
    <subcellularLocation>
        <location evidence="1">Endoplasmic reticulum lumen</location>
    </subcellularLocation>
</comment>
<comment type="alternative products">
    <event type="alternative splicing"/>
    <isoform>
        <id>Q32L47-1</id>
        <name>1</name>
        <sequence type="displayed"/>
    </isoform>
    <isoform>
        <id>Q32L47-2</id>
        <name>2</name>
        <sequence type="described" ref="VSP_060299"/>
    </isoform>
</comment>
<comment type="similarity">
    <text evidence="4">Belongs to the protein disulfide isomerase family.</text>
</comment>
<comment type="caution">
    <text evidence="4">Does not contain a CXXC active site motif indicating that it is a catalytically redox-inactive member of the protein disulfide isomerase family.</text>
</comment>
<feature type="signal peptide" evidence="2">
    <location>
        <begin position="1"/>
        <end position="25"/>
    </location>
</feature>
<feature type="chain" id="PRO_0000281117" description="Endoplasmic reticulum resident protein 27">
    <location>
        <begin position="26"/>
        <end position="272"/>
    </location>
</feature>
<feature type="domain" description="Thioredoxin" evidence="4">
    <location>
        <begin position="38"/>
        <end position="151"/>
    </location>
</feature>
<feature type="region of interest" description="PDIA3-binding site" evidence="1">
    <location>
        <begin position="229"/>
        <end position="232"/>
    </location>
</feature>
<feature type="short sequence motif" description="Prevents secretion from ER" evidence="1">
    <location>
        <begin position="269"/>
        <end position="272"/>
    </location>
</feature>
<feature type="glycosylation site" description="N-linked (GlcNAc...) asparagine" evidence="3">
    <location>
        <position position="99"/>
    </location>
</feature>
<feature type="splice variant" id="VSP_060299" description="In isoform 2." evidence="4">
    <location>
        <begin position="192"/>
        <end position="257"/>
    </location>
</feature>
<proteinExistence type="evidence at transcript level"/>
<dbReference type="EMBL" id="BC109770">
    <property type="protein sequence ID" value="AAI09771.1"/>
    <property type="molecule type" value="mRNA"/>
</dbReference>
<dbReference type="RefSeq" id="NP_001033130.1">
    <molecule id="Q32L47-2"/>
    <property type="nucleotide sequence ID" value="NM_001038041.2"/>
</dbReference>
<dbReference type="SMR" id="Q32L47"/>
<dbReference type="FunCoup" id="Q32L47">
    <property type="interactions" value="59"/>
</dbReference>
<dbReference type="STRING" id="9913.ENSBTAP00000065033"/>
<dbReference type="GlyCosmos" id="Q32L47">
    <property type="glycosylation" value="1 site, No reported glycans"/>
</dbReference>
<dbReference type="GlyGen" id="Q32L47">
    <property type="glycosylation" value="1 site"/>
</dbReference>
<dbReference type="PaxDb" id="9913-ENSBTAP00000006649"/>
<dbReference type="Ensembl" id="ENSBTAT00000006649.4">
    <molecule id="Q32L47-2"/>
    <property type="protein sequence ID" value="ENSBTAP00000006649.3"/>
    <property type="gene ID" value="ENSBTAG00000006036.6"/>
</dbReference>
<dbReference type="Ensembl" id="ENSBTAT00000083740.2">
    <molecule id="Q32L47-1"/>
    <property type="protein sequence ID" value="ENSBTAP00000065033.2"/>
    <property type="gene ID" value="ENSBTAG00000006036.6"/>
</dbReference>
<dbReference type="GeneID" id="505855"/>
<dbReference type="KEGG" id="bta:505855"/>
<dbReference type="CTD" id="121506"/>
<dbReference type="VEuPathDB" id="HostDB:ENSBTAG00000006036"/>
<dbReference type="eggNOG" id="KOG0191">
    <property type="taxonomic scope" value="Eukaryota"/>
</dbReference>
<dbReference type="GeneTree" id="ENSGT00390000006233"/>
<dbReference type="HOGENOM" id="CLU_088451_0_0_1"/>
<dbReference type="InParanoid" id="Q32L47"/>
<dbReference type="OrthoDB" id="8667660at2759"/>
<dbReference type="TreeFam" id="TF106381"/>
<dbReference type="Proteomes" id="UP000009136">
    <property type="component" value="Chromosome 5"/>
</dbReference>
<dbReference type="Bgee" id="ENSBTAG00000006036">
    <property type="expression patterns" value="Expressed in dorsal thalamus and 76 other cell types or tissues"/>
</dbReference>
<dbReference type="GO" id="GO:0005783">
    <property type="term" value="C:endoplasmic reticulum"/>
    <property type="evidence" value="ECO:0000318"/>
    <property type="project" value="GO_Central"/>
</dbReference>
<dbReference type="GO" id="GO:0005788">
    <property type="term" value="C:endoplasmic reticulum lumen"/>
    <property type="evidence" value="ECO:0007669"/>
    <property type="project" value="UniProtKB-SubCell"/>
</dbReference>
<dbReference type="GO" id="GO:0006457">
    <property type="term" value="P:protein folding"/>
    <property type="evidence" value="ECO:0000318"/>
    <property type="project" value="GO_Central"/>
</dbReference>
<dbReference type="GO" id="GO:0034976">
    <property type="term" value="P:response to endoplasmic reticulum stress"/>
    <property type="evidence" value="ECO:0000318"/>
    <property type="project" value="GO_Central"/>
</dbReference>
<dbReference type="GO" id="GO:0006986">
    <property type="term" value="P:response to unfolded protein"/>
    <property type="evidence" value="ECO:0007669"/>
    <property type="project" value="UniProtKB-KW"/>
</dbReference>
<dbReference type="CDD" id="cd02982">
    <property type="entry name" value="PDI_b'_family"/>
    <property type="match status" value="1"/>
</dbReference>
<dbReference type="CDD" id="cd02981">
    <property type="entry name" value="PDI_b_family"/>
    <property type="match status" value="1"/>
</dbReference>
<dbReference type="FunFam" id="3.40.30.10:FF:000212">
    <property type="entry name" value="Endoplasmic reticulum resident protein 27"/>
    <property type="match status" value="1"/>
</dbReference>
<dbReference type="FunFam" id="3.40.30.10:FF:000232">
    <property type="entry name" value="Endoplasmic reticulum resident protein 27"/>
    <property type="match status" value="1"/>
</dbReference>
<dbReference type="Gene3D" id="3.40.30.10">
    <property type="entry name" value="Glutaredoxin"/>
    <property type="match status" value="2"/>
</dbReference>
<dbReference type="InterPro" id="IPR036249">
    <property type="entry name" value="Thioredoxin-like_sf"/>
</dbReference>
<dbReference type="PANTHER" id="PTHR18929:SF193">
    <property type="entry name" value="ENDOPLASMIC RETICULUM RESIDENT PROTEIN 27"/>
    <property type="match status" value="1"/>
</dbReference>
<dbReference type="PANTHER" id="PTHR18929">
    <property type="entry name" value="PROTEIN DISULFIDE ISOMERASE"/>
    <property type="match status" value="1"/>
</dbReference>
<dbReference type="Pfam" id="PF13848">
    <property type="entry name" value="Thioredoxin_6"/>
    <property type="match status" value="1"/>
</dbReference>
<dbReference type="SUPFAM" id="SSF52833">
    <property type="entry name" value="Thioredoxin-like"/>
    <property type="match status" value="2"/>
</dbReference>
<accession>Q32L47</accession>
<accession>A0A3Q1M4B2</accession>